<dbReference type="EMBL" id="AAFI02000035">
    <property type="protein sequence ID" value="EAL67461.1"/>
    <property type="molecule type" value="Genomic_DNA"/>
</dbReference>
<dbReference type="RefSeq" id="XP_641444.1">
    <property type="nucleotide sequence ID" value="XM_636352.1"/>
</dbReference>
<dbReference type="SMR" id="Q54W06"/>
<dbReference type="FunCoup" id="Q54W06">
    <property type="interactions" value="402"/>
</dbReference>
<dbReference type="GlyGen" id="Q54W06">
    <property type="glycosylation" value="2 sites"/>
</dbReference>
<dbReference type="PaxDb" id="44689-DDB0235261"/>
<dbReference type="EnsemblProtists" id="EAL67461">
    <property type="protein sequence ID" value="EAL67461"/>
    <property type="gene ID" value="DDB_G0279979"/>
</dbReference>
<dbReference type="GeneID" id="8622329"/>
<dbReference type="KEGG" id="ddi:DDB_G0279979"/>
<dbReference type="dictyBase" id="DDB_G0279979"/>
<dbReference type="VEuPathDB" id="AmoebaDB:DDB_G0279979"/>
<dbReference type="eggNOG" id="ENOG502RSQK">
    <property type="taxonomic scope" value="Eukaryota"/>
</dbReference>
<dbReference type="HOGENOM" id="CLU_382838_0_0_1"/>
<dbReference type="InParanoid" id="Q54W06"/>
<dbReference type="OMA" id="WGGWFSS"/>
<dbReference type="PRO" id="PR:Q54W06"/>
<dbReference type="Proteomes" id="UP000002195">
    <property type="component" value="Chromosome 3"/>
</dbReference>
<dbReference type="GO" id="GO:0016592">
    <property type="term" value="C:mediator complex"/>
    <property type="evidence" value="ECO:0000318"/>
    <property type="project" value="GO_Central"/>
</dbReference>
<dbReference type="GO" id="GO:0003713">
    <property type="term" value="F:transcription coactivator activity"/>
    <property type="evidence" value="ECO:0000318"/>
    <property type="project" value="GO_Central"/>
</dbReference>
<dbReference type="GO" id="GO:0045944">
    <property type="term" value="P:positive regulation of transcription by RNA polymerase II"/>
    <property type="evidence" value="ECO:0000318"/>
    <property type="project" value="GO_Central"/>
</dbReference>
<protein>
    <recommendedName>
        <fullName>Uncharacterized protein DDB_G0279979</fullName>
    </recommendedName>
</protein>
<feature type="chain" id="PRO_0000352431" description="Uncharacterized protein DDB_G0279979">
    <location>
        <begin position="1"/>
        <end position="723"/>
    </location>
</feature>
<feature type="region of interest" description="Disordered" evidence="2">
    <location>
        <begin position="1"/>
        <end position="166"/>
    </location>
</feature>
<feature type="region of interest" description="Disordered" evidence="2">
    <location>
        <begin position="181"/>
        <end position="212"/>
    </location>
</feature>
<feature type="region of interest" description="Disordered" evidence="2">
    <location>
        <begin position="268"/>
        <end position="289"/>
    </location>
</feature>
<feature type="region of interest" description="Disordered" evidence="2">
    <location>
        <begin position="391"/>
        <end position="455"/>
    </location>
</feature>
<feature type="coiled-coil region" evidence="1">
    <location>
        <begin position="53"/>
        <end position="173"/>
    </location>
</feature>
<feature type="compositionally biased region" description="Basic residues" evidence="2">
    <location>
        <begin position="1"/>
        <end position="12"/>
    </location>
</feature>
<feature type="compositionally biased region" description="Low complexity" evidence="2">
    <location>
        <begin position="30"/>
        <end position="42"/>
    </location>
</feature>
<feature type="compositionally biased region" description="Basic and acidic residues" evidence="2">
    <location>
        <begin position="45"/>
        <end position="129"/>
    </location>
</feature>
<feature type="compositionally biased region" description="Basic and acidic residues" evidence="2">
    <location>
        <begin position="149"/>
        <end position="166"/>
    </location>
</feature>
<feature type="compositionally biased region" description="Basic residues" evidence="2">
    <location>
        <begin position="181"/>
        <end position="190"/>
    </location>
</feature>
<feature type="compositionally biased region" description="Pro residues" evidence="2">
    <location>
        <begin position="193"/>
        <end position="204"/>
    </location>
</feature>
<feature type="compositionally biased region" description="Acidic residues" evidence="2">
    <location>
        <begin position="272"/>
        <end position="288"/>
    </location>
</feature>
<feature type="compositionally biased region" description="Low complexity" evidence="2">
    <location>
        <begin position="397"/>
        <end position="455"/>
    </location>
</feature>
<proteinExistence type="predicted"/>
<gene>
    <name type="ORF">DDB_G0279979</name>
</gene>
<name>Y5261_DICDI</name>
<sequence length="723" mass="82320">MTGKKKNRHQKKSSQDHNNEPLTEIDQTTDETTTTTTTTTTTTEEETKNENTIVENKDEDKKVEESVQEKEEEKEKEKEKEKEKEKEKEKEKEKENNIEKEEEKKEEEKEEKNVEKEEEKEEKQTKTDDNMWNNEDEIDVPTVEGEIETDIKDEKKEEKKKVEKEIEDPNKKYFIKQKKIIKRKKEKKVKPQPVQPTPPVPAPAPQQSSGWGNWFSSIGNAVSNTITQIARVDLDDSDEDSEEEIMVEEDIEVSKKEYERYHRKKLGLPLSDTEDSDNDNDNGGDDNDNAIMNAIDNGVFKTADMIADSLYFAGSFLSSGFKTVQDNANIENVKGLTQEVSNISLDTKNKISNSELYEKSQKIASQMMDSSVDALESVGQRAYSMFSTQMKNKSNNDENNNNNNNNNQQQPQQQQTTSPTLSTSPTSPKSPTTTTTNTTTTTTTNTNNNNNNTSTNYEFNINESIFEAGEFDSSKCAEHFNITKFIQDIEKLSVESTMKAHQINRKVISTSSIKSSVDLVLNEIKELFENEELPENLSNSNTLSFSNIHIFEIEKKYREFFDKLQEFTPQLKNQSIELGLCRGLEKIYQLTAIGLELISTIASSIPDEKAPSDVTNNNNNNNNTGEWAISKSNEILFTITKITQDIKLISAMLTEIIKSKQTPNSRKLLNNLHVETTNAISYIQDTKGGFVNICQIMYLNEIKFSLKGPTSPISTPNRKQQKS</sequence>
<organism>
    <name type="scientific">Dictyostelium discoideum</name>
    <name type="common">Social amoeba</name>
    <dbReference type="NCBI Taxonomy" id="44689"/>
    <lineage>
        <taxon>Eukaryota</taxon>
        <taxon>Amoebozoa</taxon>
        <taxon>Evosea</taxon>
        <taxon>Eumycetozoa</taxon>
        <taxon>Dictyostelia</taxon>
        <taxon>Dictyosteliales</taxon>
        <taxon>Dictyosteliaceae</taxon>
        <taxon>Dictyostelium</taxon>
    </lineage>
</organism>
<evidence type="ECO:0000255" key="1"/>
<evidence type="ECO:0000256" key="2">
    <source>
        <dbReference type="SAM" id="MobiDB-lite"/>
    </source>
</evidence>
<reference key="1">
    <citation type="journal article" date="2005" name="Nature">
        <title>The genome of the social amoeba Dictyostelium discoideum.</title>
        <authorList>
            <person name="Eichinger L."/>
            <person name="Pachebat J.A."/>
            <person name="Gloeckner G."/>
            <person name="Rajandream M.A."/>
            <person name="Sucgang R."/>
            <person name="Berriman M."/>
            <person name="Song J."/>
            <person name="Olsen R."/>
            <person name="Szafranski K."/>
            <person name="Xu Q."/>
            <person name="Tunggal B."/>
            <person name="Kummerfeld S."/>
            <person name="Madera M."/>
            <person name="Konfortov B.A."/>
            <person name="Rivero F."/>
            <person name="Bankier A.T."/>
            <person name="Lehmann R."/>
            <person name="Hamlin N."/>
            <person name="Davies R."/>
            <person name="Gaudet P."/>
            <person name="Fey P."/>
            <person name="Pilcher K."/>
            <person name="Chen G."/>
            <person name="Saunders D."/>
            <person name="Sodergren E.J."/>
            <person name="Davis P."/>
            <person name="Kerhornou A."/>
            <person name="Nie X."/>
            <person name="Hall N."/>
            <person name="Anjard C."/>
            <person name="Hemphill L."/>
            <person name="Bason N."/>
            <person name="Farbrother P."/>
            <person name="Desany B."/>
            <person name="Just E."/>
            <person name="Morio T."/>
            <person name="Rost R."/>
            <person name="Churcher C.M."/>
            <person name="Cooper J."/>
            <person name="Haydock S."/>
            <person name="van Driessche N."/>
            <person name="Cronin A."/>
            <person name="Goodhead I."/>
            <person name="Muzny D.M."/>
            <person name="Mourier T."/>
            <person name="Pain A."/>
            <person name="Lu M."/>
            <person name="Harper D."/>
            <person name="Lindsay R."/>
            <person name="Hauser H."/>
            <person name="James K.D."/>
            <person name="Quiles M."/>
            <person name="Madan Babu M."/>
            <person name="Saito T."/>
            <person name="Buchrieser C."/>
            <person name="Wardroper A."/>
            <person name="Felder M."/>
            <person name="Thangavelu M."/>
            <person name="Johnson D."/>
            <person name="Knights A."/>
            <person name="Loulseged H."/>
            <person name="Mungall K.L."/>
            <person name="Oliver K."/>
            <person name="Price C."/>
            <person name="Quail M.A."/>
            <person name="Urushihara H."/>
            <person name="Hernandez J."/>
            <person name="Rabbinowitsch E."/>
            <person name="Steffen D."/>
            <person name="Sanders M."/>
            <person name="Ma J."/>
            <person name="Kohara Y."/>
            <person name="Sharp S."/>
            <person name="Simmonds M.N."/>
            <person name="Spiegler S."/>
            <person name="Tivey A."/>
            <person name="Sugano S."/>
            <person name="White B."/>
            <person name="Walker D."/>
            <person name="Woodward J.R."/>
            <person name="Winckler T."/>
            <person name="Tanaka Y."/>
            <person name="Shaulsky G."/>
            <person name="Schleicher M."/>
            <person name="Weinstock G.M."/>
            <person name="Rosenthal A."/>
            <person name="Cox E.C."/>
            <person name="Chisholm R.L."/>
            <person name="Gibbs R.A."/>
            <person name="Loomis W.F."/>
            <person name="Platzer M."/>
            <person name="Kay R.R."/>
            <person name="Williams J.G."/>
            <person name="Dear P.H."/>
            <person name="Noegel A.A."/>
            <person name="Barrell B.G."/>
            <person name="Kuspa A."/>
        </authorList>
    </citation>
    <scope>NUCLEOTIDE SEQUENCE [LARGE SCALE GENOMIC DNA]</scope>
    <source>
        <strain>AX4</strain>
    </source>
</reference>
<keyword id="KW-0175">Coiled coil</keyword>
<keyword id="KW-1185">Reference proteome</keyword>
<accession>Q54W06</accession>